<organism>
    <name type="scientific">Salmonella paratyphi A (strain AKU_12601)</name>
    <dbReference type="NCBI Taxonomy" id="554290"/>
    <lineage>
        <taxon>Bacteria</taxon>
        <taxon>Pseudomonadati</taxon>
        <taxon>Pseudomonadota</taxon>
        <taxon>Gammaproteobacteria</taxon>
        <taxon>Enterobacterales</taxon>
        <taxon>Enterobacteriaceae</taxon>
        <taxon>Salmonella</taxon>
    </lineage>
</organism>
<comment type="function">
    <text evidence="1">Divalent metal cation transporter which exports Zn(2+), Cd(2+) and possibly Fe(2+). May be involved in zinc and iron detoxification by efflux.</text>
</comment>
<comment type="catalytic activity">
    <reaction evidence="1">
        <text>Zn(2+)(in) + H(+)(out) = Zn(2+)(out) + H(+)(in)</text>
        <dbReference type="Rhea" id="RHEA:28839"/>
        <dbReference type="ChEBI" id="CHEBI:15378"/>
        <dbReference type="ChEBI" id="CHEBI:29105"/>
    </reaction>
</comment>
<comment type="catalytic activity">
    <reaction evidence="1">
        <text>Cd(2+)(in) + H(+)(out) = Cd(2+)(out) + H(+)(in)</text>
        <dbReference type="Rhea" id="RHEA:28739"/>
        <dbReference type="ChEBI" id="CHEBI:15378"/>
        <dbReference type="ChEBI" id="CHEBI:48775"/>
    </reaction>
</comment>
<comment type="catalytic activity">
    <reaction evidence="1">
        <text>Fe(2+)(in) + H(+)(out) = Fe(2+)(out) + H(+)(in)</text>
        <dbReference type="Rhea" id="RHEA:29439"/>
        <dbReference type="ChEBI" id="CHEBI:15378"/>
        <dbReference type="ChEBI" id="CHEBI:29033"/>
    </reaction>
</comment>
<comment type="subunit">
    <text evidence="1">Homodimer.</text>
</comment>
<comment type="subcellular location">
    <subcellularLocation>
        <location evidence="1">Cell inner membrane</location>
        <topology evidence="1">Multi-pass membrane protein</topology>
    </subcellularLocation>
</comment>
<comment type="similarity">
    <text evidence="1">Belongs to the cation diffusion facilitator (CDF) transporter (TC 2.A.4) family. FieF subfamily.</text>
</comment>
<proteinExistence type="inferred from homology"/>
<dbReference type="EMBL" id="FM200053">
    <property type="protein sequence ID" value="CAR61914.1"/>
    <property type="molecule type" value="Genomic_DNA"/>
</dbReference>
<dbReference type="RefSeq" id="WP_001077325.1">
    <property type="nucleotide sequence ID" value="NC_011147.1"/>
</dbReference>
<dbReference type="SMR" id="B5BJI1"/>
<dbReference type="KEGG" id="sek:SSPA3632"/>
<dbReference type="HOGENOM" id="CLU_013430_3_0_6"/>
<dbReference type="Proteomes" id="UP000001869">
    <property type="component" value="Chromosome"/>
</dbReference>
<dbReference type="GO" id="GO:0005886">
    <property type="term" value="C:plasma membrane"/>
    <property type="evidence" value="ECO:0007669"/>
    <property type="project" value="UniProtKB-SubCell"/>
</dbReference>
<dbReference type="GO" id="GO:0015086">
    <property type="term" value="F:cadmium ion transmembrane transporter activity"/>
    <property type="evidence" value="ECO:0007669"/>
    <property type="project" value="UniProtKB-UniRule"/>
</dbReference>
<dbReference type="GO" id="GO:0015093">
    <property type="term" value="F:ferrous iron transmembrane transporter activity"/>
    <property type="evidence" value="ECO:0007669"/>
    <property type="project" value="TreeGrafter"/>
</dbReference>
<dbReference type="GO" id="GO:0046872">
    <property type="term" value="F:metal ion binding"/>
    <property type="evidence" value="ECO:0007669"/>
    <property type="project" value="UniProtKB-KW"/>
</dbReference>
<dbReference type="GO" id="GO:0015341">
    <property type="term" value="F:zinc efflux antiporter activity"/>
    <property type="evidence" value="ECO:0007669"/>
    <property type="project" value="TreeGrafter"/>
</dbReference>
<dbReference type="GO" id="GO:0006882">
    <property type="term" value="P:intracellular zinc ion homeostasis"/>
    <property type="evidence" value="ECO:0007669"/>
    <property type="project" value="TreeGrafter"/>
</dbReference>
<dbReference type="FunFam" id="1.20.1510.10:FF:000001">
    <property type="entry name" value="Ferrous-iron efflux pump FieF"/>
    <property type="match status" value="1"/>
</dbReference>
<dbReference type="FunFam" id="3.30.70.1350:FF:000002">
    <property type="entry name" value="Ferrous-iron efflux pump FieF"/>
    <property type="match status" value="1"/>
</dbReference>
<dbReference type="Gene3D" id="1.20.1510.10">
    <property type="entry name" value="Cation efflux protein transmembrane domain"/>
    <property type="match status" value="1"/>
</dbReference>
<dbReference type="Gene3D" id="3.30.70.1350">
    <property type="entry name" value="Cation efflux protein, cytoplasmic domain"/>
    <property type="match status" value="1"/>
</dbReference>
<dbReference type="HAMAP" id="MF_01425">
    <property type="entry name" value="Cation_efflux_FieF"/>
    <property type="match status" value="1"/>
</dbReference>
<dbReference type="InterPro" id="IPR002524">
    <property type="entry name" value="Cation_efflux"/>
</dbReference>
<dbReference type="InterPro" id="IPR027470">
    <property type="entry name" value="Cation_efflux_CTD"/>
</dbReference>
<dbReference type="InterPro" id="IPR036837">
    <property type="entry name" value="Cation_efflux_CTD_sf"/>
</dbReference>
<dbReference type="InterPro" id="IPR023783">
    <property type="entry name" value="Cation_efflux_FieF"/>
</dbReference>
<dbReference type="InterPro" id="IPR027469">
    <property type="entry name" value="Cation_efflux_TMD_sf"/>
</dbReference>
<dbReference type="InterPro" id="IPR050291">
    <property type="entry name" value="CDF_Transporter"/>
</dbReference>
<dbReference type="NCBIfam" id="TIGR01297">
    <property type="entry name" value="CDF"/>
    <property type="match status" value="1"/>
</dbReference>
<dbReference type="NCBIfam" id="NF007064">
    <property type="entry name" value="PRK09509.1"/>
    <property type="match status" value="1"/>
</dbReference>
<dbReference type="PANTHER" id="PTHR43840:SF41">
    <property type="entry name" value="CATION-EFFLUX PUMP FIEF"/>
    <property type="match status" value="1"/>
</dbReference>
<dbReference type="PANTHER" id="PTHR43840">
    <property type="entry name" value="MITOCHONDRIAL METAL TRANSPORTER 1-RELATED"/>
    <property type="match status" value="1"/>
</dbReference>
<dbReference type="Pfam" id="PF01545">
    <property type="entry name" value="Cation_efflux"/>
    <property type="match status" value="1"/>
</dbReference>
<dbReference type="Pfam" id="PF16916">
    <property type="entry name" value="ZT_dimer"/>
    <property type="match status" value="1"/>
</dbReference>
<dbReference type="SUPFAM" id="SSF160240">
    <property type="entry name" value="Cation efflux protein cytoplasmic domain-like"/>
    <property type="match status" value="1"/>
</dbReference>
<dbReference type="SUPFAM" id="SSF161111">
    <property type="entry name" value="Cation efflux protein transmembrane domain-like"/>
    <property type="match status" value="1"/>
</dbReference>
<gene>
    <name evidence="1" type="primary">fieF</name>
    <name type="ordered locus">SSPA3632</name>
</gene>
<keyword id="KW-0997">Cell inner membrane</keyword>
<keyword id="KW-1003">Cell membrane</keyword>
<keyword id="KW-0406">Ion transport</keyword>
<keyword id="KW-0408">Iron</keyword>
<keyword id="KW-0410">Iron transport</keyword>
<keyword id="KW-0472">Membrane</keyword>
<keyword id="KW-0479">Metal-binding</keyword>
<keyword id="KW-0812">Transmembrane</keyword>
<keyword id="KW-1133">Transmembrane helix</keyword>
<keyword id="KW-0813">Transport</keyword>
<keyword id="KW-0862">Zinc</keyword>
<keyword id="KW-0864">Zinc transport</keyword>
<name>FIEF_SALPK</name>
<protein>
    <recommendedName>
        <fullName evidence="1">Cation-efflux pump FieF</fullName>
    </recommendedName>
</protein>
<feature type="chain" id="PRO_1000145705" description="Cation-efflux pump FieF">
    <location>
        <begin position="1"/>
        <end position="300"/>
    </location>
</feature>
<feature type="transmembrane region" description="Helical" evidence="1">
    <location>
        <begin position="24"/>
        <end position="44"/>
    </location>
</feature>
<feature type="transmembrane region" description="Helical" evidence="1">
    <location>
        <begin position="82"/>
        <end position="102"/>
    </location>
</feature>
<feature type="transmembrane region" description="Helical" evidence="1">
    <location>
        <begin position="114"/>
        <end position="134"/>
    </location>
</feature>
<feature type="transmembrane region" description="Helical" evidence="1">
    <location>
        <begin position="156"/>
        <end position="176"/>
    </location>
</feature>
<feature type="transmembrane region" description="Helical" evidence="1">
    <location>
        <begin position="178"/>
        <end position="198"/>
    </location>
</feature>
<feature type="binding site" evidence="1">
    <location>
        <position position="45"/>
    </location>
    <ligand>
        <name>Zn(2+)</name>
        <dbReference type="ChEBI" id="CHEBI:29105"/>
    </ligand>
</feature>
<feature type="binding site" evidence="1">
    <location>
        <position position="49"/>
    </location>
    <ligand>
        <name>Zn(2+)</name>
        <dbReference type="ChEBI" id="CHEBI:29105"/>
    </ligand>
</feature>
<feature type="binding site" evidence="1">
    <location>
        <position position="153"/>
    </location>
    <ligand>
        <name>Zn(2+)</name>
        <dbReference type="ChEBI" id="CHEBI:29105"/>
    </ligand>
</feature>
<feature type="binding site" evidence="1">
    <location>
        <position position="157"/>
    </location>
    <ligand>
        <name>Zn(2+)</name>
        <dbReference type="ChEBI" id="CHEBI:29105"/>
    </ligand>
</feature>
<evidence type="ECO:0000255" key="1">
    <source>
        <dbReference type="HAMAP-Rule" id="MF_01425"/>
    </source>
</evidence>
<accession>B5BJI1</accession>
<reference key="1">
    <citation type="journal article" date="2009" name="BMC Genomics">
        <title>Pseudogene accumulation in the evolutionary histories of Salmonella enterica serovars Paratyphi A and Typhi.</title>
        <authorList>
            <person name="Holt K.E."/>
            <person name="Thomson N.R."/>
            <person name="Wain J."/>
            <person name="Langridge G.C."/>
            <person name="Hasan R."/>
            <person name="Bhutta Z.A."/>
            <person name="Quail M.A."/>
            <person name="Norbertczak H."/>
            <person name="Walker D."/>
            <person name="Simmonds M."/>
            <person name="White B."/>
            <person name="Bason N."/>
            <person name="Mungall K."/>
            <person name="Dougan G."/>
            <person name="Parkhill J."/>
        </authorList>
    </citation>
    <scope>NUCLEOTIDE SEQUENCE [LARGE SCALE GENOMIC DNA]</scope>
    <source>
        <strain>AKU_12601</strain>
    </source>
</reference>
<sequence length="300" mass="32968">MNQTYGRLVSRAAIAATAMASALLLIKILAWWYTGSVSILAALVDSLVDIAASLTNLLVVRYSLQPADDEHTFGHGKAESLAALAQSMFISGSALFLFLTSIQNLIKPTPMNDPGVGIGVTVIALICTIILVTFQRWVVRKTQSQAVRADMLHYQSDVMMNGAILIALGLSWYGWHRADALFALGIGIYILYSALRMGYEAVQSLLDRALPDAERQEIIDIVTSWPGVSGAHDLRTRQSGPTRFIQIHLEMEDNLPLVQAHFVADQVEQAILRRFPGSDVIIHQDPCSVVPREGRKFELV</sequence>